<name>RHAT_SHIDS</name>
<gene>
    <name evidence="1" type="primary">rhaT</name>
    <name type="ordered locus">SDY_3839</name>
</gene>
<sequence>MSNAITMGIFWHLIGAASAACFYAPFKKVKKWSWETMWSVGGIVSWIILPWAISALLLPNFWAYYSSFSLSTLLPVFLFGAMWGIGNINYGLTMRYLGMSMGIGIAIGITLIVGTLMTPIINGNFDVLISTEGGRMTLLGVLVALIGVGIVTRAGQLKERKMGIKAEEFNLKKGLVLAVMCGIFSAGMSFAMNAAKPMYEAAAALGVDPLYVALPSYVVIMGGGAIINLGFCFIRLAKVKDLSLKVDFSLEKPLIIHNVLLSALGGLMWYLQFFFYAWGHARIPAQYDYISWMLHMSFYVLCGGIVGLVLKEWNNAGRRPVTVLSLGCVVIIVAANIVGIGMAN</sequence>
<protein>
    <recommendedName>
        <fullName evidence="1">L-rhamnose-proton symporter</fullName>
    </recommendedName>
    <alternativeName>
        <fullName evidence="1">L-rhamnose-H(+) transport protein</fullName>
    </alternativeName>
</protein>
<proteinExistence type="inferred from homology"/>
<reference key="1">
    <citation type="journal article" date="2005" name="Nucleic Acids Res.">
        <title>Genome dynamics and diversity of Shigella species, the etiologic agents of bacillary dysentery.</title>
        <authorList>
            <person name="Yang F."/>
            <person name="Yang J."/>
            <person name="Zhang X."/>
            <person name="Chen L."/>
            <person name="Jiang Y."/>
            <person name="Yan Y."/>
            <person name="Tang X."/>
            <person name="Wang J."/>
            <person name="Xiong Z."/>
            <person name="Dong J."/>
            <person name="Xue Y."/>
            <person name="Zhu Y."/>
            <person name="Xu X."/>
            <person name="Sun L."/>
            <person name="Chen S."/>
            <person name="Nie H."/>
            <person name="Peng J."/>
            <person name="Xu J."/>
            <person name="Wang Y."/>
            <person name="Yuan Z."/>
            <person name="Wen Y."/>
            <person name="Yao Z."/>
            <person name="Shen Y."/>
            <person name="Qiang B."/>
            <person name="Hou Y."/>
            <person name="Yu J."/>
            <person name="Jin Q."/>
        </authorList>
    </citation>
    <scope>NUCLEOTIDE SEQUENCE [LARGE SCALE GENOMIC DNA]</scope>
    <source>
        <strain>Sd197</strain>
    </source>
</reference>
<evidence type="ECO:0000255" key="1">
    <source>
        <dbReference type="HAMAP-Rule" id="MF_01532"/>
    </source>
</evidence>
<dbReference type="EMBL" id="CP000034">
    <property type="protein sequence ID" value="ABB63783.1"/>
    <property type="molecule type" value="Genomic_DNA"/>
</dbReference>
<dbReference type="RefSeq" id="WP_000063521.1">
    <property type="nucleotide sequence ID" value="NC_007606.1"/>
</dbReference>
<dbReference type="RefSeq" id="YP_405274.1">
    <property type="nucleotide sequence ID" value="NC_007606.1"/>
</dbReference>
<dbReference type="STRING" id="300267.SDY_3839"/>
<dbReference type="EnsemblBacteria" id="ABB63783">
    <property type="protein sequence ID" value="ABB63783"/>
    <property type="gene ID" value="SDY_3839"/>
</dbReference>
<dbReference type="KEGG" id="sdy:SDY_3839"/>
<dbReference type="PATRIC" id="fig|300267.13.peg.4534"/>
<dbReference type="HOGENOM" id="CLU_066437_0_0_6"/>
<dbReference type="Proteomes" id="UP000002716">
    <property type="component" value="Chromosome"/>
</dbReference>
<dbReference type="GO" id="GO:0005886">
    <property type="term" value="C:plasma membrane"/>
    <property type="evidence" value="ECO:0007669"/>
    <property type="project" value="UniProtKB-SubCell"/>
</dbReference>
<dbReference type="GO" id="GO:0015153">
    <property type="term" value="F:rhamnose transmembrane transporter activity"/>
    <property type="evidence" value="ECO:0007669"/>
    <property type="project" value="UniProtKB-UniRule"/>
</dbReference>
<dbReference type="GO" id="GO:0015293">
    <property type="term" value="F:symporter activity"/>
    <property type="evidence" value="ECO:0007669"/>
    <property type="project" value="UniProtKB-KW"/>
</dbReference>
<dbReference type="HAMAP" id="MF_01532">
    <property type="entry name" value="RhaT"/>
    <property type="match status" value="1"/>
</dbReference>
<dbReference type="InterPro" id="IPR004673">
    <property type="entry name" value="L-rhamnose-proton_sym_RhaT"/>
</dbReference>
<dbReference type="NCBIfam" id="NF010021">
    <property type="entry name" value="PRK13499.1-1"/>
    <property type="match status" value="1"/>
</dbReference>
<dbReference type="NCBIfam" id="NF010023">
    <property type="entry name" value="PRK13499.1-3"/>
    <property type="match status" value="1"/>
</dbReference>
<dbReference type="NCBIfam" id="TIGR00776">
    <property type="entry name" value="RhaT"/>
    <property type="match status" value="1"/>
</dbReference>
<dbReference type="Pfam" id="PF06379">
    <property type="entry name" value="RhaT"/>
    <property type="match status" value="1"/>
</dbReference>
<keyword id="KW-0997">Cell inner membrane</keyword>
<keyword id="KW-1003">Cell membrane</keyword>
<keyword id="KW-0472">Membrane</keyword>
<keyword id="KW-1185">Reference proteome</keyword>
<keyword id="KW-0762">Sugar transport</keyword>
<keyword id="KW-0769">Symport</keyword>
<keyword id="KW-0812">Transmembrane</keyword>
<keyword id="KW-1133">Transmembrane helix</keyword>
<keyword id="KW-0813">Transport</keyword>
<accession>Q32A72</accession>
<feature type="chain" id="PRO_0000292767" description="L-rhamnose-proton symporter">
    <location>
        <begin position="1"/>
        <end position="344"/>
    </location>
</feature>
<feature type="transmembrane region" description="Helical" evidence="1">
    <location>
        <begin position="4"/>
        <end position="24"/>
    </location>
</feature>
<feature type="transmembrane region" description="Helical" evidence="1">
    <location>
        <begin position="38"/>
        <end position="58"/>
    </location>
</feature>
<feature type="transmembrane region" description="Helical" evidence="1">
    <location>
        <begin position="68"/>
        <end position="88"/>
    </location>
</feature>
<feature type="transmembrane region" description="Helical" evidence="1">
    <location>
        <begin position="101"/>
        <end position="121"/>
    </location>
</feature>
<feature type="transmembrane region" description="Helical" evidence="1">
    <location>
        <begin position="137"/>
        <end position="157"/>
    </location>
</feature>
<feature type="transmembrane region" description="Helical" evidence="1">
    <location>
        <begin position="175"/>
        <end position="195"/>
    </location>
</feature>
<feature type="transmembrane region" description="Helical" evidence="1">
    <location>
        <begin position="214"/>
        <end position="234"/>
    </location>
</feature>
<feature type="transmembrane region" description="Helical" evidence="1">
    <location>
        <begin position="259"/>
        <end position="279"/>
    </location>
</feature>
<feature type="transmembrane region" description="Helical" evidence="1">
    <location>
        <begin position="290"/>
        <end position="310"/>
    </location>
</feature>
<feature type="transmembrane region" description="Helical" evidence="1">
    <location>
        <begin position="323"/>
        <end position="343"/>
    </location>
</feature>
<comment type="function">
    <text evidence="1">Uptake of L-rhamnose across the cytoplasmic membrane with the concomitant transport of protons into the cell (symport system).</text>
</comment>
<comment type="catalytic activity">
    <reaction evidence="1">
        <text>L-rhamnopyranose(in) + H(+)(in) = L-rhamnopyranose(out) + H(+)(out)</text>
        <dbReference type="Rhea" id="RHEA:29947"/>
        <dbReference type="ChEBI" id="CHEBI:15378"/>
        <dbReference type="ChEBI" id="CHEBI:62346"/>
    </reaction>
    <physiologicalReaction direction="right-to-left" evidence="1">
        <dbReference type="Rhea" id="RHEA:29949"/>
    </physiologicalReaction>
</comment>
<comment type="subcellular location">
    <subcellularLocation>
        <location evidence="1">Cell inner membrane</location>
        <topology evidence="1">Multi-pass membrane protein</topology>
    </subcellularLocation>
</comment>
<comment type="similarity">
    <text evidence="1">Belongs to the L-rhamnose transporter (TC 2.A.7.6) family.</text>
</comment>
<organism>
    <name type="scientific">Shigella dysenteriae serotype 1 (strain Sd197)</name>
    <dbReference type="NCBI Taxonomy" id="300267"/>
    <lineage>
        <taxon>Bacteria</taxon>
        <taxon>Pseudomonadati</taxon>
        <taxon>Pseudomonadota</taxon>
        <taxon>Gammaproteobacteria</taxon>
        <taxon>Enterobacterales</taxon>
        <taxon>Enterobacteriaceae</taxon>
        <taxon>Shigella</taxon>
    </lineage>
</organism>